<dbReference type="EMBL" id="CP001146">
    <property type="protein sequence ID" value="ACI18917.1"/>
    <property type="molecule type" value="Genomic_DNA"/>
</dbReference>
<dbReference type="RefSeq" id="WP_012547549.1">
    <property type="nucleotide sequence ID" value="NC_011297.1"/>
</dbReference>
<dbReference type="SMR" id="B5YFL4"/>
<dbReference type="STRING" id="309799.DICTH_1505"/>
<dbReference type="PaxDb" id="309799-DICTH_1505"/>
<dbReference type="KEGG" id="dth:DICTH_1505"/>
<dbReference type="eggNOG" id="COG0217">
    <property type="taxonomic scope" value="Bacteria"/>
</dbReference>
<dbReference type="HOGENOM" id="CLU_062974_2_2_0"/>
<dbReference type="OrthoDB" id="9781053at2"/>
<dbReference type="Proteomes" id="UP000001733">
    <property type="component" value="Chromosome"/>
</dbReference>
<dbReference type="GO" id="GO:0005829">
    <property type="term" value="C:cytosol"/>
    <property type="evidence" value="ECO:0007669"/>
    <property type="project" value="TreeGrafter"/>
</dbReference>
<dbReference type="GO" id="GO:0003677">
    <property type="term" value="F:DNA binding"/>
    <property type="evidence" value="ECO:0007669"/>
    <property type="project" value="UniProtKB-UniRule"/>
</dbReference>
<dbReference type="GO" id="GO:0006355">
    <property type="term" value="P:regulation of DNA-templated transcription"/>
    <property type="evidence" value="ECO:0007669"/>
    <property type="project" value="UniProtKB-UniRule"/>
</dbReference>
<dbReference type="FunFam" id="1.10.10.200:FF:000002">
    <property type="entry name" value="Probable transcriptional regulatory protein CLM62_37755"/>
    <property type="match status" value="1"/>
</dbReference>
<dbReference type="FunFam" id="3.30.70.980:FF:000002">
    <property type="entry name" value="Probable transcriptional regulatory protein YebC"/>
    <property type="match status" value="1"/>
</dbReference>
<dbReference type="Gene3D" id="1.10.10.200">
    <property type="match status" value="1"/>
</dbReference>
<dbReference type="Gene3D" id="3.30.70.980">
    <property type="match status" value="2"/>
</dbReference>
<dbReference type="HAMAP" id="MF_00693">
    <property type="entry name" value="Transcrip_reg_TACO1"/>
    <property type="match status" value="1"/>
</dbReference>
<dbReference type="InterPro" id="IPR017856">
    <property type="entry name" value="Integrase-like_N"/>
</dbReference>
<dbReference type="InterPro" id="IPR048300">
    <property type="entry name" value="TACO1_YebC-like_2nd/3rd_dom"/>
</dbReference>
<dbReference type="InterPro" id="IPR049083">
    <property type="entry name" value="TACO1_YebC_N"/>
</dbReference>
<dbReference type="InterPro" id="IPR002876">
    <property type="entry name" value="Transcrip_reg_TACO1-like"/>
</dbReference>
<dbReference type="InterPro" id="IPR026564">
    <property type="entry name" value="Transcrip_reg_TACO1-like_dom3"/>
</dbReference>
<dbReference type="InterPro" id="IPR029072">
    <property type="entry name" value="YebC-like"/>
</dbReference>
<dbReference type="NCBIfam" id="NF001030">
    <property type="entry name" value="PRK00110.1"/>
    <property type="match status" value="1"/>
</dbReference>
<dbReference type="NCBIfam" id="NF009044">
    <property type="entry name" value="PRK12378.1"/>
    <property type="match status" value="1"/>
</dbReference>
<dbReference type="NCBIfam" id="TIGR01033">
    <property type="entry name" value="YebC/PmpR family DNA-binding transcriptional regulator"/>
    <property type="match status" value="1"/>
</dbReference>
<dbReference type="PANTHER" id="PTHR12532:SF6">
    <property type="entry name" value="TRANSCRIPTIONAL REGULATORY PROTEIN YEBC-RELATED"/>
    <property type="match status" value="1"/>
</dbReference>
<dbReference type="PANTHER" id="PTHR12532">
    <property type="entry name" value="TRANSLATIONAL ACTIVATOR OF CYTOCHROME C OXIDASE 1"/>
    <property type="match status" value="1"/>
</dbReference>
<dbReference type="Pfam" id="PF20772">
    <property type="entry name" value="TACO1_YebC_N"/>
    <property type="match status" value="1"/>
</dbReference>
<dbReference type="Pfam" id="PF01709">
    <property type="entry name" value="Transcrip_reg"/>
    <property type="match status" value="1"/>
</dbReference>
<dbReference type="SUPFAM" id="SSF75625">
    <property type="entry name" value="YebC-like"/>
    <property type="match status" value="1"/>
</dbReference>
<gene>
    <name type="ordered locus">DICTH_1505</name>
</gene>
<reference key="1">
    <citation type="journal article" date="2014" name="Genome Announc.">
        <title>Complete Genome Sequence of the Extreme Thermophile Dictyoglomus thermophilum H-6-12.</title>
        <authorList>
            <person name="Coil D.A."/>
            <person name="Badger J.H."/>
            <person name="Forberger H.C."/>
            <person name="Riggs F."/>
            <person name="Madupu R."/>
            <person name="Fedorova N."/>
            <person name="Ward N."/>
            <person name="Robb F.T."/>
            <person name="Eisen J.A."/>
        </authorList>
    </citation>
    <scope>NUCLEOTIDE SEQUENCE [LARGE SCALE GENOMIC DNA]</scope>
    <source>
        <strain>ATCC 35947 / DSM 3960 / H-6-12</strain>
    </source>
</reference>
<keyword id="KW-0963">Cytoplasm</keyword>
<keyword id="KW-0238">DNA-binding</keyword>
<keyword id="KW-0804">Transcription</keyword>
<keyword id="KW-0805">Transcription regulation</keyword>
<comment type="subcellular location">
    <subcellularLocation>
        <location evidence="1">Cytoplasm</location>
    </subcellularLocation>
</comment>
<comment type="similarity">
    <text evidence="1">Belongs to the TACO1 family.</text>
</comment>
<evidence type="ECO:0000255" key="1">
    <source>
        <dbReference type="HAMAP-Rule" id="MF_00693"/>
    </source>
</evidence>
<organism>
    <name type="scientific">Dictyoglomus thermophilum (strain ATCC 35947 / DSM 3960 / H-6-12)</name>
    <dbReference type="NCBI Taxonomy" id="309799"/>
    <lineage>
        <taxon>Bacteria</taxon>
        <taxon>Pseudomonadati</taxon>
        <taxon>Dictyoglomota</taxon>
        <taxon>Dictyoglomia</taxon>
        <taxon>Dictyoglomales</taxon>
        <taxon>Dictyoglomaceae</taxon>
        <taxon>Dictyoglomus</taxon>
    </lineage>
</organism>
<proteinExistence type="inferred from homology"/>
<feature type="chain" id="PRO_1000132188" description="Probable transcriptional regulatory protein DICTH_1505">
    <location>
        <begin position="1"/>
        <end position="249"/>
    </location>
</feature>
<sequence>MSGHSKWANIKHRKAAADAKKGKLFSQLSKEIIIAAKHGGGNPETNPRLRAAIERAKEANMPKENIEKAIMRGIGAIPGVAYEEVTYEGYGPGGVAIMVEVVTDNKNRTAAEIRRIFTKHGGSLGEAGCVAWIFEDKGSIFIEKESVKDEDQLIADALEAGAEDVQISGDSVEIITSPENFSEVKNVLEEKGYKITQAEVTKVPKNVVPVDGPDAEKVLKLMEELEDHDDVQKTYANFDIPDEILQSLS</sequence>
<protein>
    <recommendedName>
        <fullName evidence="1">Probable transcriptional regulatory protein DICTH_1505</fullName>
    </recommendedName>
</protein>
<accession>B5YFL4</accession>
<name>Y1505_DICT6</name>